<gene>
    <name evidence="1" type="primary">atpH</name>
    <name type="ordered locus">Rleg2_3655</name>
</gene>
<sequence length="188" mass="20019">MPVADTSQLTSGVAERYASSLFDLALEQGAVDSVTADLDRFQAMLDESADLKRFVASPVFSAEDQLKAIVAISEKAGISGFFANFLKVVARNRRLFALPGMIKAFRIIAANHRGEISAEVTSAHALSQAQETELKVALKSVTGKDVTIAVTVDPSILGGLIVKVGSRQIDTSLRTKLSTLKLALKEVG</sequence>
<proteinExistence type="inferred from homology"/>
<comment type="function">
    <text evidence="1">F(1)F(0) ATP synthase produces ATP from ADP in the presence of a proton or sodium gradient. F-type ATPases consist of two structural domains, F(1) containing the extramembraneous catalytic core and F(0) containing the membrane proton channel, linked together by a central stalk and a peripheral stalk. During catalysis, ATP synthesis in the catalytic domain of F(1) is coupled via a rotary mechanism of the central stalk subunits to proton translocation.</text>
</comment>
<comment type="function">
    <text evidence="1">This protein is part of the stalk that links CF(0) to CF(1). It either transmits conformational changes from CF(0) to CF(1) or is implicated in proton conduction.</text>
</comment>
<comment type="subunit">
    <text evidence="1">F-type ATPases have 2 components, F(1) - the catalytic core - and F(0) - the membrane proton channel. F(1) has five subunits: alpha(3), beta(3), gamma(1), delta(1), epsilon(1). F(0) has three main subunits: a(1), b(2) and c(10-14). The alpha and beta chains form an alternating ring which encloses part of the gamma chain. F(1) is attached to F(0) by a central stalk formed by the gamma and epsilon chains, while a peripheral stalk is formed by the delta and b chains.</text>
</comment>
<comment type="subcellular location">
    <subcellularLocation>
        <location evidence="1">Cell inner membrane</location>
        <topology evidence="1">Peripheral membrane protein</topology>
    </subcellularLocation>
</comment>
<comment type="similarity">
    <text evidence="1">Belongs to the ATPase delta chain family.</text>
</comment>
<reference key="1">
    <citation type="journal article" date="2010" name="Stand. Genomic Sci.">
        <title>Complete genome sequence of Rhizobium leguminosarum bv trifolii strain WSM2304, an effective microsymbiont of the South American clover Trifolium polymorphum.</title>
        <authorList>
            <person name="Reeve W."/>
            <person name="O'Hara G."/>
            <person name="Chain P."/>
            <person name="Ardley J."/>
            <person name="Brau L."/>
            <person name="Nandesena K."/>
            <person name="Tiwari R."/>
            <person name="Malfatti S."/>
            <person name="Kiss H."/>
            <person name="Lapidus A."/>
            <person name="Copeland A."/>
            <person name="Nolan M."/>
            <person name="Land M."/>
            <person name="Ivanova N."/>
            <person name="Mavromatis K."/>
            <person name="Markowitz V."/>
            <person name="Kyrpides N."/>
            <person name="Melino V."/>
            <person name="Denton M."/>
            <person name="Yates R."/>
            <person name="Howieson J."/>
        </authorList>
    </citation>
    <scope>NUCLEOTIDE SEQUENCE [LARGE SCALE GENOMIC DNA]</scope>
    <source>
        <strain>WSM2304</strain>
    </source>
</reference>
<dbReference type="EMBL" id="CP001191">
    <property type="protein sequence ID" value="ACI56918.1"/>
    <property type="molecule type" value="Genomic_DNA"/>
</dbReference>
<dbReference type="RefSeq" id="WP_003589849.1">
    <property type="nucleotide sequence ID" value="NC_011369.1"/>
</dbReference>
<dbReference type="SMR" id="B5ZSP0"/>
<dbReference type="STRING" id="395492.Rleg2_3655"/>
<dbReference type="KEGG" id="rlt:Rleg2_3655"/>
<dbReference type="eggNOG" id="COG0712">
    <property type="taxonomic scope" value="Bacteria"/>
</dbReference>
<dbReference type="HOGENOM" id="CLU_085114_0_1_5"/>
<dbReference type="Proteomes" id="UP000008330">
    <property type="component" value="Chromosome"/>
</dbReference>
<dbReference type="GO" id="GO:0005886">
    <property type="term" value="C:plasma membrane"/>
    <property type="evidence" value="ECO:0007669"/>
    <property type="project" value="UniProtKB-SubCell"/>
</dbReference>
<dbReference type="GO" id="GO:0045259">
    <property type="term" value="C:proton-transporting ATP synthase complex"/>
    <property type="evidence" value="ECO:0007669"/>
    <property type="project" value="UniProtKB-KW"/>
</dbReference>
<dbReference type="GO" id="GO:0046933">
    <property type="term" value="F:proton-transporting ATP synthase activity, rotational mechanism"/>
    <property type="evidence" value="ECO:0007669"/>
    <property type="project" value="UniProtKB-UniRule"/>
</dbReference>
<dbReference type="Gene3D" id="1.10.520.20">
    <property type="entry name" value="N-terminal domain of the delta subunit of the F1F0-ATP synthase"/>
    <property type="match status" value="1"/>
</dbReference>
<dbReference type="HAMAP" id="MF_01416">
    <property type="entry name" value="ATP_synth_delta_bact"/>
    <property type="match status" value="1"/>
</dbReference>
<dbReference type="InterPro" id="IPR026015">
    <property type="entry name" value="ATP_synth_OSCP/delta_N_sf"/>
</dbReference>
<dbReference type="InterPro" id="IPR020781">
    <property type="entry name" value="ATPase_OSCP/d_CS"/>
</dbReference>
<dbReference type="InterPro" id="IPR000711">
    <property type="entry name" value="ATPase_OSCP/dsu"/>
</dbReference>
<dbReference type="NCBIfam" id="TIGR01145">
    <property type="entry name" value="ATP_synt_delta"/>
    <property type="match status" value="1"/>
</dbReference>
<dbReference type="NCBIfam" id="NF004402">
    <property type="entry name" value="PRK05758.2-2"/>
    <property type="match status" value="1"/>
</dbReference>
<dbReference type="NCBIfam" id="NF004406">
    <property type="entry name" value="PRK05758.3-2"/>
    <property type="match status" value="1"/>
</dbReference>
<dbReference type="PANTHER" id="PTHR11910">
    <property type="entry name" value="ATP SYNTHASE DELTA CHAIN"/>
    <property type="match status" value="1"/>
</dbReference>
<dbReference type="Pfam" id="PF00213">
    <property type="entry name" value="OSCP"/>
    <property type="match status" value="1"/>
</dbReference>
<dbReference type="PRINTS" id="PR00125">
    <property type="entry name" value="ATPASEDELTA"/>
</dbReference>
<dbReference type="SUPFAM" id="SSF47928">
    <property type="entry name" value="N-terminal domain of the delta subunit of the F1F0-ATP synthase"/>
    <property type="match status" value="1"/>
</dbReference>
<dbReference type="PROSITE" id="PS00389">
    <property type="entry name" value="ATPASE_DELTA"/>
    <property type="match status" value="1"/>
</dbReference>
<name>ATPD_RHILW</name>
<protein>
    <recommendedName>
        <fullName evidence="1">ATP synthase subunit delta</fullName>
    </recommendedName>
    <alternativeName>
        <fullName evidence="1">ATP synthase F(1) sector subunit delta</fullName>
    </alternativeName>
    <alternativeName>
        <fullName evidence="1">F-type ATPase subunit delta</fullName>
        <shortName evidence="1">F-ATPase subunit delta</shortName>
    </alternativeName>
</protein>
<keyword id="KW-0066">ATP synthesis</keyword>
<keyword id="KW-0997">Cell inner membrane</keyword>
<keyword id="KW-1003">Cell membrane</keyword>
<keyword id="KW-0139">CF(1)</keyword>
<keyword id="KW-0375">Hydrogen ion transport</keyword>
<keyword id="KW-0406">Ion transport</keyword>
<keyword id="KW-0472">Membrane</keyword>
<keyword id="KW-1185">Reference proteome</keyword>
<keyword id="KW-0813">Transport</keyword>
<evidence type="ECO:0000255" key="1">
    <source>
        <dbReference type="HAMAP-Rule" id="MF_01416"/>
    </source>
</evidence>
<organism>
    <name type="scientific">Rhizobium leguminosarum bv. trifolii (strain WSM2304)</name>
    <dbReference type="NCBI Taxonomy" id="395492"/>
    <lineage>
        <taxon>Bacteria</taxon>
        <taxon>Pseudomonadati</taxon>
        <taxon>Pseudomonadota</taxon>
        <taxon>Alphaproteobacteria</taxon>
        <taxon>Hyphomicrobiales</taxon>
        <taxon>Rhizobiaceae</taxon>
        <taxon>Rhizobium/Agrobacterium group</taxon>
        <taxon>Rhizobium</taxon>
    </lineage>
</organism>
<accession>B5ZSP0</accession>
<feature type="chain" id="PRO_1000184775" description="ATP synthase subunit delta">
    <location>
        <begin position="1"/>
        <end position="188"/>
    </location>
</feature>